<sequence>MPRALWPAWVWAIIILSMEGASDKASSLSCDPTGVCDGRSRSLNSIPSGLTAGVKSLDLSNNEITYVGNRDLQRCVNLKTLRLGANEIHTVEEDSFFHLRNLEYLDLSYNRLSNLSSSWFRSLYVLKFLNLLGNLYKTLGETSLFSHLPDLRTLKVGNSNSFTEIHEKDFTGLTFLEELEISAQNLQIYVPKSLKSIQNISHLILHLKQPVLLVDILVDIVSSLDCLELRDTNLHTFHFSEASISEMSTSVKKLIFRNVQFTDESFVEVVKLFNYVSGIVEVEFDDCTHDGIGDFRALSLDRIRHLGNVETLTIRKLHIPQFFLFQDLSSIYPLTGKVKRVTIENSKVFLVPCLLSQHLKSLEYLDLSENLMSEETLKNSACKDAWPFLQTLVLRQNRLKSLEKTGELLLTLKNLNNLDISKNNFLSMPETCQWPGKMKQLNLSSTKIRSLTQCLPQTLEILDVSNNNLDSFSLILPQLKELYISRNKLKTLPDASFLPVLSVMGISKNIINTFSKEQLDSFQQLKTLEAGGNNFICSCDFLSFTQGQQALGRVLVDWPDDYRCDSPSHVRGQRLQDARLSLSECHRAAVVSAACCALFLFLLLTGVLCHRFHGLWYMKIMWAWLQAKRKPRKAPRRDICYDAFVSYSERDSYWVENLMVQELEHFNPPFKLCLHKRDFIPGKWIIDNIIDSIEKSHKTIFVLSENFVKSEWCKYELDFSHFRLFDENNDAVILILLEPIDKKAIPQRFCKLRKIMNTKTYLEWPLDETQQEGFWLNLRAAIRS</sequence>
<protein>
    <recommendedName>
        <fullName>Toll-like receptor 2</fullName>
    </recommendedName>
    <cdAntigenName>CD282</cdAntigenName>
</protein>
<feature type="signal peptide" evidence="5">
    <location>
        <begin position="1"/>
        <end position="20"/>
    </location>
</feature>
<feature type="chain" id="PRO_0000253494" description="Toll-like receptor 2">
    <location>
        <begin position="21"/>
        <end position="784"/>
    </location>
</feature>
<feature type="topological domain" description="Extracellular" evidence="5">
    <location>
        <begin position="21"/>
        <end position="587"/>
    </location>
</feature>
<feature type="transmembrane region" description="Helical" evidence="5">
    <location>
        <begin position="588"/>
        <end position="608"/>
    </location>
</feature>
<feature type="topological domain" description="Cytoplasmic" evidence="5">
    <location>
        <begin position="609"/>
        <end position="784"/>
    </location>
</feature>
<feature type="repeat" description="LRR 1">
    <location>
        <begin position="54"/>
        <end position="77"/>
    </location>
</feature>
<feature type="repeat" description="LRR 2">
    <location>
        <begin position="78"/>
        <end position="101"/>
    </location>
</feature>
<feature type="repeat" description="LRR 3">
    <location>
        <begin position="102"/>
        <end position="125"/>
    </location>
</feature>
<feature type="repeat" description="LRR 4">
    <location>
        <begin position="126"/>
        <end position="150"/>
    </location>
</feature>
<feature type="repeat" description="LRR 5">
    <location>
        <begin position="151"/>
        <end position="175"/>
    </location>
</feature>
<feature type="repeat" description="LRR 6">
    <location>
        <begin position="176"/>
        <end position="199"/>
    </location>
</feature>
<feature type="repeat" description="LRR 7">
    <location>
        <begin position="200"/>
        <end position="223"/>
    </location>
</feature>
<feature type="repeat" description="LRR 8">
    <location>
        <begin position="224"/>
        <end position="250"/>
    </location>
</feature>
<feature type="repeat" description="LRR 9">
    <location>
        <begin position="251"/>
        <end position="278"/>
    </location>
</feature>
<feature type="repeat" description="LRR 10">
    <location>
        <begin position="279"/>
        <end position="308"/>
    </location>
</feature>
<feature type="repeat" description="LRR 11">
    <location>
        <begin position="309"/>
        <end position="337"/>
    </location>
</feature>
<feature type="repeat" description="LRR 12">
    <location>
        <begin position="338"/>
        <end position="361"/>
    </location>
</feature>
<feature type="repeat" description="LRR 13">
    <location>
        <begin position="362"/>
        <end position="388"/>
    </location>
</feature>
<feature type="repeat" description="LRR 14">
    <location>
        <begin position="389"/>
        <end position="414"/>
    </location>
</feature>
<feature type="repeat" description="LRR 15">
    <location>
        <begin position="415"/>
        <end position="437"/>
    </location>
</feature>
<feature type="repeat" description="LRR 16">
    <location>
        <begin position="438"/>
        <end position="457"/>
    </location>
</feature>
<feature type="repeat" description="LRR 17">
    <location>
        <begin position="458"/>
        <end position="478"/>
    </location>
</feature>
<feature type="repeat" description="LRR 18">
    <location>
        <begin position="479"/>
        <end position="500"/>
    </location>
</feature>
<feature type="repeat" description="LRR 19">
    <location>
        <begin position="501"/>
        <end position="524"/>
    </location>
</feature>
<feature type="domain" description="LRRCT">
    <location>
        <begin position="525"/>
        <end position="579"/>
    </location>
</feature>
<feature type="domain" description="TIR" evidence="6">
    <location>
        <begin position="639"/>
        <end position="782"/>
    </location>
</feature>
<feature type="short sequence motif" description="ATG16L1-binding motif">
    <location>
        <begin position="761"/>
        <end position="778"/>
    </location>
</feature>
<feature type="site" description="Interaction with bacterial lipopeptide" evidence="1">
    <location>
        <position position="349"/>
    </location>
</feature>
<feature type="glycosylation site" description="N-linked (GlcNAc...) asparagine" evidence="5">
    <location>
        <position position="114"/>
    </location>
</feature>
<feature type="glycosylation site" description="N-linked (GlcNAc...) asparagine" evidence="5">
    <location>
        <position position="199"/>
    </location>
</feature>
<feature type="glycosylation site" description="N-linked (GlcNAc...) asparagine" evidence="5">
    <location>
        <position position="442"/>
    </location>
</feature>
<feature type="disulfide bond" evidence="1">
    <location>
        <begin position="30"/>
        <end position="36"/>
    </location>
</feature>
<feature type="disulfide bond" evidence="1">
    <location>
        <begin position="353"/>
        <end position="382"/>
    </location>
</feature>
<feature type="disulfide bond" evidence="1">
    <location>
        <begin position="432"/>
        <end position="454"/>
    </location>
</feature>
<feature type="cross-link" description="Glycyl lysine isopeptide (Lys-Gly) (interchain with G-Cter in ubiquitin)" evidence="3">
    <location>
        <position position="754"/>
    </location>
</feature>
<reference key="1">
    <citation type="submission" date="2005-11" db="EMBL/GenBank/DDBJ databases">
        <title>Full-length cDNA cloning of toll-like receptor 2 in Boselaphus tragocamelus.</title>
        <authorList>
            <person name="Das D.K."/>
            <person name="Saini M."/>
            <person name="Swarup D."/>
            <person name="Yadav M.P."/>
            <person name="Sharma B."/>
            <person name="Gupta P.K."/>
        </authorList>
    </citation>
    <scope>NUCLEOTIDE SEQUENCE [MRNA]</scope>
</reference>
<proteinExistence type="evidence at transcript level"/>
<accession>Q2V897</accession>
<organism>
    <name type="scientific">Boselaphus tragocamelus</name>
    <name type="common">Nilgai</name>
    <dbReference type="NCBI Taxonomy" id="9917"/>
    <lineage>
        <taxon>Eukaryota</taxon>
        <taxon>Metazoa</taxon>
        <taxon>Chordata</taxon>
        <taxon>Craniata</taxon>
        <taxon>Vertebrata</taxon>
        <taxon>Euteleostomi</taxon>
        <taxon>Mammalia</taxon>
        <taxon>Eutheria</taxon>
        <taxon>Laurasiatheria</taxon>
        <taxon>Artiodactyla</taxon>
        <taxon>Ruminantia</taxon>
        <taxon>Pecora</taxon>
        <taxon>Bovidae</taxon>
        <taxon>Bovinae</taxon>
        <taxon>Boselaphus</taxon>
    </lineage>
</organism>
<dbReference type="EMBL" id="DQ286731">
    <property type="protein sequence ID" value="ABB97025.1"/>
    <property type="molecule type" value="mRNA"/>
</dbReference>
<dbReference type="SMR" id="Q2V897"/>
<dbReference type="GlyCosmos" id="Q2V897">
    <property type="glycosylation" value="3 sites, No reported glycans"/>
</dbReference>
<dbReference type="GO" id="GO:0005794">
    <property type="term" value="C:Golgi apparatus"/>
    <property type="evidence" value="ECO:0000250"/>
    <property type="project" value="UniProtKB"/>
</dbReference>
<dbReference type="GO" id="GO:0045121">
    <property type="term" value="C:membrane raft"/>
    <property type="evidence" value="ECO:0000250"/>
    <property type="project" value="UniProtKB"/>
</dbReference>
<dbReference type="GO" id="GO:0030670">
    <property type="term" value="C:phagocytic vesicle membrane"/>
    <property type="evidence" value="ECO:0007669"/>
    <property type="project" value="UniProtKB-SubCell"/>
</dbReference>
<dbReference type="GO" id="GO:0005886">
    <property type="term" value="C:plasma membrane"/>
    <property type="evidence" value="ECO:0007669"/>
    <property type="project" value="TreeGrafter"/>
</dbReference>
<dbReference type="GO" id="GO:0043235">
    <property type="term" value="C:receptor complex"/>
    <property type="evidence" value="ECO:0007669"/>
    <property type="project" value="TreeGrafter"/>
</dbReference>
<dbReference type="GO" id="GO:0061809">
    <property type="term" value="F:NAD+ nucleosidase activity, cyclic ADP-ribose generating"/>
    <property type="evidence" value="ECO:0007669"/>
    <property type="project" value="UniProtKB-EC"/>
</dbReference>
<dbReference type="GO" id="GO:0004888">
    <property type="term" value="F:transmembrane signaling receptor activity"/>
    <property type="evidence" value="ECO:0007669"/>
    <property type="project" value="InterPro"/>
</dbReference>
<dbReference type="GO" id="GO:0042497">
    <property type="term" value="F:triacyl lipopeptide binding"/>
    <property type="evidence" value="ECO:0007669"/>
    <property type="project" value="TreeGrafter"/>
</dbReference>
<dbReference type="GO" id="GO:0071726">
    <property type="term" value="P:cellular response to diacyl bacterial lipopeptide"/>
    <property type="evidence" value="ECO:0000250"/>
    <property type="project" value="UniProtKB"/>
</dbReference>
<dbReference type="GO" id="GO:0071727">
    <property type="term" value="P:cellular response to triacyl bacterial lipopeptide"/>
    <property type="evidence" value="ECO:0000250"/>
    <property type="project" value="UniProtKB"/>
</dbReference>
<dbReference type="GO" id="GO:0006954">
    <property type="term" value="P:inflammatory response"/>
    <property type="evidence" value="ECO:0007669"/>
    <property type="project" value="UniProtKB-KW"/>
</dbReference>
<dbReference type="GO" id="GO:0045087">
    <property type="term" value="P:innate immune response"/>
    <property type="evidence" value="ECO:0007669"/>
    <property type="project" value="UniProtKB-KW"/>
</dbReference>
<dbReference type="GO" id="GO:0002224">
    <property type="term" value="P:toll-like receptor signaling pathway"/>
    <property type="evidence" value="ECO:0007669"/>
    <property type="project" value="InterPro"/>
</dbReference>
<dbReference type="FunFam" id="3.40.50.10140:FF:000001">
    <property type="entry name" value="Toll-like receptor 2"/>
    <property type="match status" value="1"/>
</dbReference>
<dbReference type="FunFam" id="3.80.10.10:FF:000046">
    <property type="entry name" value="Toll-like receptor 2"/>
    <property type="match status" value="1"/>
</dbReference>
<dbReference type="Gene3D" id="3.80.10.10">
    <property type="entry name" value="Ribonuclease Inhibitor"/>
    <property type="match status" value="1"/>
</dbReference>
<dbReference type="Gene3D" id="3.40.50.10140">
    <property type="entry name" value="Toll/interleukin-1 receptor homology (TIR) domain"/>
    <property type="match status" value="1"/>
</dbReference>
<dbReference type="InterPro" id="IPR000483">
    <property type="entry name" value="Cys-rich_flank_reg_C"/>
</dbReference>
<dbReference type="InterPro" id="IPR001611">
    <property type="entry name" value="Leu-rich_rpt"/>
</dbReference>
<dbReference type="InterPro" id="IPR003591">
    <property type="entry name" value="Leu-rich_rpt_typical-subtyp"/>
</dbReference>
<dbReference type="InterPro" id="IPR032675">
    <property type="entry name" value="LRR_dom_sf"/>
</dbReference>
<dbReference type="InterPro" id="IPR000157">
    <property type="entry name" value="TIR_dom"/>
</dbReference>
<dbReference type="InterPro" id="IPR017241">
    <property type="entry name" value="Toll-like_receptor"/>
</dbReference>
<dbReference type="InterPro" id="IPR035897">
    <property type="entry name" value="Toll_tir_struct_dom_sf"/>
</dbReference>
<dbReference type="PANTHER" id="PTHR24365">
    <property type="entry name" value="TOLL-LIKE RECEPTOR"/>
    <property type="match status" value="1"/>
</dbReference>
<dbReference type="PANTHER" id="PTHR24365:SF17">
    <property type="entry name" value="TOLL-LIKE RECEPTOR 2"/>
    <property type="match status" value="1"/>
</dbReference>
<dbReference type="Pfam" id="PF13855">
    <property type="entry name" value="LRR_8"/>
    <property type="match status" value="2"/>
</dbReference>
<dbReference type="Pfam" id="PF01582">
    <property type="entry name" value="TIR"/>
    <property type="match status" value="1"/>
</dbReference>
<dbReference type="PIRSF" id="PIRSF037595">
    <property type="entry name" value="Toll-like_receptor"/>
    <property type="match status" value="1"/>
</dbReference>
<dbReference type="PRINTS" id="PR01537">
    <property type="entry name" value="INTRLKN1R1F"/>
</dbReference>
<dbReference type="PRINTS" id="PR00019">
    <property type="entry name" value="LEURICHRPT"/>
</dbReference>
<dbReference type="SMART" id="SM00364">
    <property type="entry name" value="LRR_BAC"/>
    <property type="match status" value="5"/>
</dbReference>
<dbReference type="SMART" id="SM00365">
    <property type="entry name" value="LRR_SD22"/>
    <property type="match status" value="6"/>
</dbReference>
<dbReference type="SMART" id="SM00369">
    <property type="entry name" value="LRR_TYP"/>
    <property type="match status" value="6"/>
</dbReference>
<dbReference type="SMART" id="SM00082">
    <property type="entry name" value="LRRCT"/>
    <property type="match status" value="1"/>
</dbReference>
<dbReference type="SMART" id="SM00255">
    <property type="entry name" value="TIR"/>
    <property type="match status" value="1"/>
</dbReference>
<dbReference type="SUPFAM" id="SSF52058">
    <property type="entry name" value="L domain-like"/>
    <property type="match status" value="2"/>
</dbReference>
<dbReference type="SUPFAM" id="SSF52200">
    <property type="entry name" value="Toll/Interleukin receptor TIR domain"/>
    <property type="match status" value="1"/>
</dbReference>
<dbReference type="PROSITE" id="PS51450">
    <property type="entry name" value="LRR"/>
    <property type="match status" value="10"/>
</dbReference>
<dbReference type="PROSITE" id="PS50104">
    <property type="entry name" value="TIR"/>
    <property type="match status" value="1"/>
</dbReference>
<comment type="function">
    <text evidence="3 4">Cooperates with LY96 to mediate the innate immune response to bacterial lipoproteins and other microbial cell wall components. Cooperates with TLR1 or TLR6 to mediate the innate immune response to bacterial lipoproteins or lipopeptides. Acts via MYD88 and TRAF6, leading to NF-kappa-B activation, cytokine secretion and the inflammatory response (By similarity). May also promote apoptosis in response to lipoproteins. Forms activation clusters composed of several receptors depending on the ligand, these clusters trigger signaling from the cell surface and subsequently are targeted to the Golgi in a lipid-raft dependent pathway. Forms the cluster TLR2:TLR6:CD14:CD36 in response to diacylated lipopeptides and TLR2:TLR1:CD14 in response to triacylated lipopeptides (By similarity).</text>
</comment>
<comment type="subunit">
    <text evidence="3 4">Interacts with LY96, TLR1 and TLR6 (via extracellular domain). TLR2 seems to exist in heterodimers with either TLR1 or TLR6 before stimulation by the ligand. The heterodimers form bigger oligomers in response to their corresponding ligands as well as further heterotypic associations with other receptors such as CD14 and/or CD36. Binds MYD88 (via TIR domain). Interacts with TICAM1. Interacts with CNPY3. Interacts with ATG16L1. Interacts with PPP1R11. Interacts with TICAM2. Interacts with TIRAP (By similarity).</text>
</comment>
<comment type="subcellular location">
    <subcellularLocation>
        <location evidence="4">Membrane</location>
        <topology evidence="5">Single-pass type I membrane protein</topology>
    </subcellularLocation>
    <subcellularLocation>
        <location evidence="4">Cytoplasmic vesicle</location>
        <location evidence="4">Phagosome membrane</location>
        <topology evidence="5">Single-pass type I membrane protein</topology>
    </subcellularLocation>
    <subcellularLocation>
        <location evidence="3">Membrane raft</location>
    </subcellularLocation>
    <text evidence="3">Does not reside in lipid rafts before stimulation but accumulates increasingly in the raft upon the presence of the microbial ligand. In response to diacylated lipoproteins, TLR2:TLR6 heterodimers are recruited in lipid rafts, this recruitment determine the intracellular targeting to the Golgi apparatus. Triacylated lipoproteins induce the same mechanism for TLR2:TLR1 heterodimers.</text>
</comment>
<comment type="domain">
    <text evidence="1">Ester-bound lipid substrates are bound through a crevice formed between the LRR 11 and LRR 12.</text>
</comment>
<comment type="domain">
    <text evidence="1">The ATG16L1-binding motif mediates interaction with ATG16L1.</text>
</comment>
<comment type="PTM">
    <text evidence="4">Ubiquitinated at Lys-754 by PPP1R11, leading to its degradation. Deubiquitinated by USP2.</text>
</comment>
<comment type="PTM">
    <text evidence="3">Glycosylation of Asn-442 is critical for secretion of the N-terminal ectodomain of TLR2.</text>
</comment>
<comment type="similarity">
    <text evidence="7">Belongs to the Toll-like receptor family.</text>
</comment>
<comment type="caution">
    <text evidence="2 7">In some plant proteins and in human SARM1, the TIR domain has NAD(+) hydrolase (NADase) activity (By similarity). However, despite the presence of the catalytic Asp residue, the isolated TIR domain of human TLR4 lacks NADase activity (By similarity). Based on this, it is unlikely that Toll-like receptors have NADase activity.</text>
</comment>
<name>TLR2_BOSTR</name>
<gene>
    <name type="primary">TLR2</name>
</gene>
<evidence type="ECO:0000250" key="1"/>
<evidence type="ECO:0000250" key="2">
    <source>
        <dbReference type="UniProtKB" id="O00206"/>
    </source>
</evidence>
<evidence type="ECO:0000250" key="3">
    <source>
        <dbReference type="UniProtKB" id="O60603"/>
    </source>
</evidence>
<evidence type="ECO:0000250" key="4">
    <source>
        <dbReference type="UniProtKB" id="Q9QUN7"/>
    </source>
</evidence>
<evidence type="ECO:0000255" key="5"/>
<evidence type="ECO:0000255" key="6">
    <source>
        <dbReference type="PROSITE-ProRule" id="PRU00204"/>
    </source>
</evidence>
<evidence type="ECO:0000305" key="7"/>
<keyword id="KW-0968">Cytoplasmic vesicle</keyword>
<keyword id="KW-1015">Disulfide bond</keyword>
<keyword id="KW-0325">Glycoprotein</keyword>
<keyword id="KW-0391">Immunity</keyword>
<keyword id="KW-0395">Inflammatory response</keyword>
<keyword id="KW-0399">Innate immunity</keyword>
<keyword id="KW-1017">Isopeptide bond</keyword>
<keyword id="KW-0433">Leucine-rich repeat</keyword>
<keyword id="KW-0472">Membrane</keyword>
<keyword id="KW-0520">NAD</keyword>
<keyword id="KW-0675">Receptor</keyword>
<keyword id="KW-0677">Repeat</keyword>
<keyword id="KW-0732">Signal</keyword>
<keyword id="KW-0812">Transmembrane</keyword>
<keyword id="KW-1133">Transmembrane helix</keyword>
<keyword id="KW-0832">Ubl conjugation</keyword>